<comment type="function">
    <text evidence="1">Core subunit of the mitochondrial membrane respiratory chain NADH dehydrogenase (Complex I) which catalyzes electron transfer from NADH through the respiratory chain, using ubiquinone as an electron acceptor. Essential for the catalytic activity and assembly of complex I.</text>
</comment>
<comment type="catalytic activity">
    <reaction evidence="1">
        <text>a ubiquinone + NADH + 5 H(+)(in) = a ubiquinol + NAD(+) + 4 H(+)(out)</text>
        <dbReference type="Rhea" id="RHEA:29091"/>
        <dbReference type="Rhea" id="RHEA-COMP:9565"/>
        <dbReference type="Rhea" id="RHEA-COMP:9566"/>
        <dbReference type="ChEBI" id="CHEBI:15378"/>
        <dbReference type="ChEBI" id="CHEBI:16389"/>
        <dbReference type="ChEBI" id="CHEBI:17976"/>
        <dbReference type="ChEBI" id="CHEBI:57540"/>
        <dbReference type="ChEBI" id="CHEBI:57945"/>
        <dbReference type="EC" id="7.1.1.2"/>
    </reaction>
</comment>
<comment type="subunit">
    <text evidence="2">Core subunit of respiratory chain NADH dehydrogenase (Complex I) which is composed of 45 different subunits.</text>
</comment>
<comment type="subcellular location">
    <subcellularLocation>
        <location evidence="2">Mitochondrion inner membrane</location>
        <topology evidence="3">Multi-pass membrane protein</topology>
    </subcellularLocation>
</comment>
<comment type="similarity">
    <text evidence="4">Belongs to the complex I subunit 6 family.</text>
</comment>
<gene>
    <name type="primary">MT-ND6</name>
    <name type="synonym">MTND6</name>
    <name type="synonym">NADH6</name>
    <name type="synonym">ND6</name>
</gene>
<protein>
    <recommendedName>
        <fullName>NADH-ubiquinone oxidoreductase chain 6</fullName>
        <ecNumber evidence="1">7.1.1.2</ecNumber>
    </recommendedName>
    <alternativeName>
        <fullName>NADH dehydrogenase subunit 6</fullName>
    </alternativeName>
</protein>
<dbReference type="EC" id="7.1.1.2" evidence="1"/>
<dbReference type="EMBL" id="AJ224821">
    <property type="protein sequence ID" value="CAA12149.1"/>
    <property type="molecule type" value="Genomic_DNA"/>
</dbReference>
<dbReference type="EMBL" id="DQ316069">
    <property type="protein sequence ID" value="ABC17915.1"/>
    <property type="molecule type" value="Genomic_DNA"/>
</dbReference>
<dbReference type="PIR" id="T45561">
    <property type="entry name" value="T45561"/>
</dbReference>
<dbReference type="RefSeq" id="NP_009290.1">
    <property type="nucleotide sequence ID" value="NC_000934.1"/>
</dbReference>
<dbReference type="SMR" id="Q9TA18"/>
<dbReference type="FunCoup" id="Q9TA18">
    <property type="interactions" value="74"/>
</dbReference>
<dbReference type="STRING" id="9785.ENSLAFP00000029502"/>
<dbReference type="Ensembl" id="ENSLAFT00000038067.1">
    <property type="protein sequence ID" value="ENSLAFP00000029502.1"/>
    <property type="gene ID" value="ENSLAFG00000033301.1"/>
</dbReference>
<dbReference type="GeneID" id="808795"/>
<dbReference type="KEGG" id="lav:808795"/>
<dbReference type="CTD" id="4541"/>
<dbReference type="eggNOG" id="ENOG502S2Q2">
    <property type="taxonomic scope" value="Eukaryota"/>
</dbReference>
<dbReference type="GeneTree" id="ENSGT00390000003988"/>
<dbReference type="HOGENOM" id="CLU_129718_0_0_1"/>
<dbReference type="InParanoid" id="Q9TA18"/>
<dbReference type="OMA" id="WVIYDTG"/>
<dbReference type="OrthoDB" id="9837654at2759"/>
<dbReference type="TreeFam" id="TF343324"/>
<dbReference type="Proteomes" id="UP000007646">
    <property type="component" value="Unassembled WGS sequence"/>
</dbReference>
<dbReference type="GO" id="GO:0005743">
    <property type="term" value="C:mitochondrial inner membrane"/>
    <property type="evidence" value="ECO:0000250"/>
    <property type="project" value="UniProtKB"/>
</dbReference>
<dbReference type="GO" id="GO:0008137">
    <property type="term" value="F:NADH dehydrogenase (ubiquinone) activity"/>
    <property type="evidence" value="ECO:0000250"/>
    <property type="project" value="UniProtKB"/>
</dbReference>
<dbReference type="GO" id="GO:0006120">
    <property type="term" value="P:mitochondrial electron transport, NADH to ubiquinone"/>
    <property type="evidence" value="ECO:0000250"/>
    <property type="project" value="UniProtKB"/>
</dbReference>
<dbReference type="GO" id="GO:0032981">
    <property type="term" value="P:mitochondrial respiratory chain complex I assembly"/>
    <property type="evidence" value="ECO:0000250"/>
    <property type="project" value="UniProtKB"/>
</dbReference>
<dbReference type="Gene3D" id="1.20.120.1200">
    <property type="entry name" value="NADH-ubiquinone/plastoquinone oxidoreductase chain 6, subunit NuoJ"/>
    <property type="match status" value="1"/>
</dbReference>
<dbReference type="InterPro" id="IPR050269">
    <property type="entry name" value="ComplexI_Subunit6"/>
</dbReference>
<dbReference type="InterPro" id="IPR001457">
    <property type="entry name" value="NADH_UbQ/plastoQ_OxRdtase_su6"/>
</dbReference>
<dbReference type="InterPro" id="IPR042106">
    <property type="entry name" value="Nuo/plastoQ_OxRdtase_6_NuoJ"/>
</dbReference>
<dbReference type="PANTHER" id="PTHR11435">
    <property type="entry name" value="NADH UBIQUINONE OXIDOREDUCTASE SUBUNIT ND6"/>
    <property type="match status" value="1"/>
</dbReference>
<dbReference type="PANTHER" id="PTHR11435:SF1">
    <property type="entry name" value="NADH-UBIQUINONE OXIDOREDUCTASE CHAIN 6"/>
    <property type="match status" value="1"/>
</dbReference>
<dbReference type="Pfam" id="PF00499">
    <property type="entry name" value="Oxidored_q3"/>
    <property type="match status" value="1"/>
</dbReference>
<proteinExistence type="inferred from homology"/>
<name>NU6M_LOXAF</name>
<keyword id="KW-0249">Electron transport</keyword>
<keyword id="KW-0472">Membrane</keyword>
<keyword id="KW-0496">Mitochondrion</keyword>
<keyword id="KW-0999">Mitochondrion inner membrane</keyword>
<keyword id="KW-0520">NAD</keyword>
<keyword id="KW-1185">Reference proteome</keyword>
<keyword id="KW-0679">Respiratory chain</keyword>
<keyword id="KW-1278">Translocase</keyword>
<keyword id="KW-0812">Transmembrane</keyword>
<keyword id="KW-1133">Transmembrane helix</keyword>
<keyword id="KW-0813">Transport</keyword>
<keyword id="KW-0830">Ubiquinone</keyword>
<geneLocation type="mitochondrion"/>
<evidence type="ECO:0000250" key="1">
    <source>
        <dbReference type="UniProtKB" id="P03923"/>
    </source>
</evidence>
<evidence type="ECO:0000250" key="2">
    <source>
        <dbReference type="UniProtKB" id="P03924"/>
    </source>
</evidence>
<evidence type="ECO:0000255" key="3"/>
<evidence type="ECO:0000305" key="4"/>
<feature type="chain" id="PRO_0000118298" description="NADH-ubiquinone oxidoreductase chain 6">
    <location>
        <begin position="1"/>
        <end position="175"/>
    </location>
</feature>
<feature type="transmembrane region" description="Helical" evidence="3">
    <location>
        <begin position="1"/>
        <end position="21"/>
    </location>
</feature>
<feature type="transmembrane region" description="Helical" evidence="3">
    <location>
        <begin position="25"/>
        <end position="45"/>
    </location>
</feature>
<feature type="transmembrane region" description="Helical" evidence="3">
    <location>
        <begin position="51"/>
        <end position="71"/>
    </location>
</feature>
<feature type="transmembrane region" description="Helical" evidence="3">
    <location>
        <begin position="87"/>
        <end position="107"/>
    </location>
</feature>
<feature type="transmembrane region" description="Helical" evidence="3">
    <location>
        <begin position="112"/>
        <end position="132"/>
    </location>
</feature>
<feature type="transmembrane region" description="Helical" evidence="3">
    <location>
        <begin position="148"/>
        <end position="168"/>
    </location>
</feature>
<reference key="1">
    <citation type="journal article" date="2000" name="Zoology">
        <title>The complete mitochondrial genome sequence of the African elephant (Loxodonta africana), phylogenetic relationships of Proboscidea to other mammals and D-loop heteroplasmy.</title>
        <authorList>
            <person name="Hauf J."/>
            <person name="Waddell P.J."/>
            <person name="Chalwatzis N."/>
            <person name="Joger U."/>
            <person name="Zimmermann F.K."/>
        </authorList>
    </citation>
    <scope>NUCLEOTIDE SEQUENCE [GENOMIC DNA]</scope>
    <source>
        <tissue>Blood</tissue>
    </source>
</reference>
<reference key="2">
    <citation type="journal article" date="2006" name="PLoS Biol.">
        <title>Complete mitochondrial genome and phylogeny of Pleistocene mammoth Mammuthus primigenius.</title>
        <authorList>
            <person name="Rogaev E.I."/>
            <person name="Moliaka Y.K."/>
            <person name="Malyarchuk B.A."/>
            <person name="Kondrashov F.A."/>
            <person name="Derenko M.V."/>
            <person name="Chumakov I."/>
            <person name="Grigorenko A.P."/>
        </authorList>
    </citation>
    <scope>NUCLEOTIDE SEQUENCE [GENOMIC DNA]</scope>
    <source>
        <tissue>Blood</tissue>
    </source>
</reference>
<sequence length="175" mass="19172">MMYIVFIMSVLYVVGFIGFSSKPSPVYGGMSLVVSGGLGCGIIMGSGGSFLGLVVFLVYLGGMMVVFGYTIAMATEEYPETWGSNVVVLGAFLVGLLMEVFMIMWLFSGEHELVGFYFGGLEDLMVLGEGGFEYVREDYSGGASLYSYGFWFLAMAGWMLFVSIFIAIEVTRKRY</sequence>
<organism>
    <name type="scientific">Loxodonta africana</name>
    <name type="common">African elephant</name>
    <dbReference type="NCBI Taxonomy" id="9785"/>
    <lineage>
        <taxon>Eukaryota</taxon>
        <taxon>Metazoa</taxon>
        <taxon>Chordata</taxon>
        <taxon>Craniata</taxon>
        <taxon>Vertebrata</taxon>
        <taxon>Euteleostomi</taxon>
        <taxon>Mammalia</taxon>
        <taxon>Eutheria</taxon>
        <taxon>Afrotheria</taxon>
        <taxon>Proboscidea</taxon>
        <taxon>Elephantidae</taxon>
        <taxon>Loxodonta</taxon>
    </lineage>
</organism>
<accession>Q9TA18</accession>
<accession>Q2I3F0</accession>